<reference key="1">
    <citation type="submission" date="2006-09" db="EMBL/GenBank/DDBJ databases">
        <title>Complete sequence of chromosome 1 of Shewanella sp. ANA-3.</title>
        <authorList>
            <person name="Copeland A."/>
            <person name="Lucas S."/>
            <person name="Lapidus A."/>
            <person name="Barry K."/>
            <person name="Detter J.C."/>
            <person name="Glavina del Rio T."/>
            <person name="Hammon N."/>
            <person name="Israni S."/>
            <person name="Dalin E."/>
            <person name="Tice H."/>
            <person name="Pitluck S."/>
            <person name="Chertkov O."/>
            <person name="Brettin T."/>
            <person name="Bruce D."/>
            <person name="Han C."/>
            <person name="Tapia R."/>
            <person name="Gilna P."/>
            <person name="Schmutz J."/>
            <person name="Larimer F."/>
            <person name="Land M."/>
            <person name="Hauser L."/>
            <person name="Kyrpides N."/>
            <person name="Kim E."/>
            <person name="Newman D."/>
            <person name="Salticov C."/>
            <person name="Konstantinidis K."/>
            <person name="Klappenback J."/>
            <person name="Tiedje J."/>
            <person name="Richardson P."/>
        </authorList>
    </citation>
    <scope>NUCLEOTIDE SEQUENCE [LARGE SCALE GENOMIC DNA]</scope>
    <source>
        <strain>ANA-3</strain>
    </source>
</reference>
<keyword id="KW-0067">ATP-binding</keyword>
<keyword id="KW-0143">Chaperone</keyword>
<keyword id="KW-0479">Metal-binding</keyword>
<keyword id="KW-0547">Nucleotide-binding</keyword>
<keyword id="KW-0862">Zinc</keyword>
<comment type="function">
    <text evidence="1">ATP-dependent specificity component of the Clp protease. It directs the protease to specific substrates. Can perform chaperone functions in the absence of ClpP.</text>
</comment>
<comment type="subunit">
    <text evidence="1">Component of the ClpX-ClpP complex. Forms a hexameric ring that, in the presence of ATP, binds to fourteen ClpP subunits assembled into a disk-like structure with a central cavity, resembling the structure of eukaryotic proteasomes.</text>
</comment>
<comment type="similarity">
    <text evidence="1">Belongs to the ClpX chaperone family.</text>
</comment>
<sequence length="426" mass="46562">MGDNKNNGDSGKLLYCSFCGKSQHEVRKLIAGPSVYVCDECVELCNDIIREEIKEISPKRDNDKLPTPHELRAHLDDYVIGQDRAKKVLSVAVYNHYKRLRNSSPKDGVELGKSNILLIGPTGSGKTLLAETLARSLNVPFTMADATTLTEAGYVGEDVENIIQKLLQKCDYDVEKAQRGIVYIDEIDKISRKSDNPSITRDVSGEGVQQALLKLIEGTVAAVPPQGGRKHPQQEFLQVDTSKILFICGGAFAGLEKVIEQRAHVGSGIGFGAQVKGEKDKATISQTLSQVEPEDLVKYGLIPEFIGRLPVVATLTELDEEALVQILSEPKNALTKQYNALFEMEGVELEFREDALKAIAHKAMSRKTGARGLRSIVEGILLDTMYDIPSIEGVVKAVVDESVVNGESAPILIYERNEAQAASGEQ</sequence>
<accession>A0KYL8</accession>
<protein>
    <recommendedName>
        <fullName evidence="1">ATP-dependent Clp protease ATP-binding subunit ClpX</fullName>
    </recommendedName>
</protein>
<dbReference type="EMBL" id="CP000469">
    <property type="protein sequence ID" value="ABK48887.1"/>
    <property type="molecule type" value="Genomic_DNA"/>
</dbReference>
<dbReference type="RefSeq" id="WP_011717549.1">
    <property type="nucleotide sequence ID" value="NC_008577.1"/>
</dbReference>
<dbReference type="SMR" id="A0KYL8"/>
<dbReference type="STRING" id="94122.Shewana3_2660"/>
<dbReference type="KEGG" id="shn:Shewana3_2660"/>
<dbReference type="eggNOG" id="COG1219">
    <property type="taxonomic scope" value="Bacteria"/>
</dbReference>
<dbReference type="HOGENOM" id="CLU_014218_8_2_6"/>
<dbReference type="OrthoDB" id="9804062at2"/>
<dbReference type="Proteomes" id="UP000002589">
    <property type="component" value="Chromosome"/>
</dbReference>
<dbReference type="GO" id="GO:0009376">
    <property type="term" value="C:HslUV protease complex"/>
    <property type="evidence" value="ECO:0007669"/>
    <property type="project" value="TreeGrafter"/>
</dbReference>
<dbReference type="GO" id="GO:0005524">
    <property type="term" value="F:ATP binding"/>
    <property type="evidence" value="ECO:0007669"/>
    <property type="project" value="UniProtKB-UniRule"/>
</dbReference>
<dbReference type="GO" id="GO:0016887">
    <property type="term" value="F:ATP hydrolysis activity"/>
    <property type="evidence" value="ECO:0007669"/>
    <property type="project" value="InterPro"/>
</dbReference>
<dbReference type="GO" id="GO:0140662">
    <property type="term" value="F:ATP-dependent protein folding chaperone"/>
    <property type="evidence" value="ECO:0007669"/>
    <property type="project" value="InterPro"/>
</dbReference>
<dbReference type="GO" id="GO:0046983">
    <property type="term" value="F:protein dimerization activity"/>
    <property type="evidence" value="ECO:0007669"/>
    <property type="project" value="InterPro"/>
</dbReference>
<dbReference type="GO" id="GO:0051082">
    <property type="term" value="F:unfolded protein binding"/>
    <property type="evidence" value="ECO:0007669"/>
    <property type="project" value="UniProtKB-UniRule"/>
</dbReference>
<dbReference type="GO" id="GO:0008270">
    <property type="term" value="F:zinc ion binding"/>
    <property type="evidence" value="ECO:0007669"/>
    <property type="project" value="InterPro"/>
</dbReference>
<dbReference type="GO" id="GO:0051301">
    <property type="term" value="P:cell division"/>
    <property type="evidence" value="ECO:0007669"/>
    <property type="project" value="TreeGrafter"/>
</dbReference>
<dbReference type="GO" id="GO:0051603">
    <property type="term" value="P:proteolysis involved in protein catabolic process"/>
    <property type="evidence" value="ECO:0007669"/>
    <property type="project" value="TreeGrafter"/>
</dbReference>
<dbReference type="CDD" id="cd19497">
    <property type="entry name" value="RecA-like_ClpX"/>
    <property type="match status" value="1"/>
</dbReference>
<dbReference type="FunFam" id="1.10.8.60:FF:000002">
    <property type="entry name" value="ATP-dependent Clp protease ATP-binding subunit ClpX"/>
    <property type="match status" value="1"/>
</dbReference>
<dbReference type="FunFam" id="3.40.50.300:FF:000005">
    <property type="entry name" value="ATP-dependent Clp protease ATP-binding subunit ClpX"/>
    <property type="match status" value="1"/>
</dbReference>
<dbReference type="Gene3D" id="1.10.8.60">
    <property type="match status" value="1"/>
</dbReference>
<dbReference type="Gene3D" id="6.20.220.10">
    <property type="entry name" value="ClpX chaperone, C4-type zinc finger domain"/>
    <property type="match status" value="1"/>
</dbReference>
<dbReference type="Gene3D" id="3.40.50.300">
    <property type="entry name" value="P-loop containing nucleotide triphosphate hydrolases"/>
    <property type="match status" value="1"/>
</dbReference>
<dbReference type="HAMAP" id="MF_00175">
    <property type="entry name" value="ClpX"/>
    <property type="match status" value="1"/>
</dbReference>
<dbReference type="InterPro" id="IPR003593">
    <property type="entry name" value="AAA+_ATPase"/>
</dbReference>
<dbReference type="InterPro" id="IPR050052">
    <property type="entry name" value="ATP-dep_Clp_protease_ClpX"/>
</dbReference>
<dbReference type="InterPro" id="IPR003959">
    <property type="entry name" value="ATPase_AAA_core"/>
</dbReference>
<dbReference type="InterPro" id="IPR019489">
    <property type="entry name" value="Clp_ATPase_C"/>
</dbReference>
<dbReference type="InterPro" id="IPR004487">
    <property type="entry name" value="Clp_protease_ATP-bd_su_ClpX"/>
</dbReference>
<dbReference type="InterPro" id="IPR046425">
    <property type="entry name" value="ClpX_bact"/>
</dbReference>
<dbReference type="InterPro" id="IPR027417">
    <property type="entry name" value="P-loop_NTPase"/>
</dbReference>
<dbReference type="InterPro" id="IPR010603">
    <property type="entry name" value="Znf_CppX_C4"/>
</dbReference>
<dbReference type="InterPro" id="IPR038366">
    <property type="entry name" value="Znf_CppX_C4_sf"/>
</dbReference>
<dbReference type="NCBIfam" id="TIGR00382">
    <property type="entry name" value="clpX"/>
    <property type="match status" value="1"/>
</dbReference>
<dbReference type="NCBIfam" id="NF003745">
    <property type="entry name" value="PRK05342.1"/>
    <property type="match status" value="1"/>
</dbReference>
<dbReference type="PANTHER" id="PTHR48102:SF7">
    <property type="entry name" value="ATP-DEPENDENT CLP PROTEASE ATP-BINDING SUBUNIT CLPX-LIKE, MITOCHONDRIAL"/>
    <property type="match status" value="1"/>
</dbReference>
<dbReference type="PANTHER" id="PTHR48102">
    <property type="entry name" value="ATP-DEPENDENT CLP PROTEASE ATP-BINDING SUBUNIT CLPX-LIKE, MITOCHONDRIAL-RELATED"/>
    <property type="match status" value="1"/>
</dbReference>
<dbReference type="Pfam" id="PF07724">
    <property type="entry name" value="AAA_2"/>
    <property type="match status" value="1"/>
</dbReference>
<dbReference type="Pfam" id="PF10431">
    <property type="entry name" value="ClpB_D2-small"/>
    <property type="match status" value="1"/>
</dbReference>
<dbReference type="Pfam" id="PF06689">
    <property type="entry name" value="zf-C4_ClpX"/>
    <property type="match status" value="1"/>
</dbReference>
<dbReference type="SMART" id="SM00382">
    <property type="entry name" value="AAA"/>
    <property type="match status" value="1"/>
</dbReference>
<dbReference type="SMART" id="SM01086">
    <property type="entry name" value="ClpB_D2-small"/>
    <property type="match status" value="1"/>
</dbReference>
<dbReference type="SMART" id="SM00994">
    <property type="entry name" value="zf-C4_ClpX"/>
    <property type="match status" value="1"/>
</dbReference>
<dbReference type="SUPFAM" id="SSF57716">
    <property type="entry name" value="Glucocorticoid receptor-like (DNA-binding domain)"/>
    <property type="match status" value="1"/>
</dbReference>
<dbReference type="SUPFAM" id="SSF52540">
    <property type="entry name" value="P-loop containing nucleoside triphosphate hydrolases"/>
    <property type="match status" value="1"/>
</dbReference>
<dbReference type="PROSITE" id="PS51902">
    <property type="entry name" value="CLPX_ZB"/>
    <property type="match status" value="1"/>
</dbReference>
<proteinExistence type="inferred from homology"/>
<organism>
    <name type="scientific">Shewanella sp. (strain ANA-3)</name>
    <dbReference type="NCBI Taxonomy" id="94122"/>
    <lineage>
        <taxon>Bacteria</taxon>
        <taxon>Pseudomonadati</taxon>
        <taxon>Pseudomonadota</taxon>
        <taxon>Gammaproteobacteria</taxon>
        <taxon>Alteromonadales</taxon>
        <taxon>Shewanellaceae</taxon>
        <taxon>Shewanella</taxon>
    </lineage>
</organism>
<evidence type="ECO:0000255" key="1">
    <source>
        <dbReference type="HAMAP-Rule" id="MF_00175"/>
    </source>
</evidence>
<evidence type="ECO:0000255" key="2">
    <source>
        <dbReference type="PROSITE-ProRule" id="PRU01250"/>
    </source>
</evidence>
<gene>
    <name evidence="1" type="primary">clpX</name>
    <name type="ordered locus">Shewana3_2660</name>
</gene>
<feature type="chain" id="PRO_1000024656" description="ATP-dependent Clp protease ATP-binding subunit ClpX">
    <location>
        <begin position="1"/>
        <end position="426"/>
    </location>
</feature>
<feature type="domain" description="ClpX-type ZB" evidence="2">
    <location>
        <begin position="4"/>
        <end position="57"/>
    </location>
</feature>
<feature type="binding site" evidence="2">
    <location>
        <position position="16"/>
    </location>
    <ligand>
        <name>Zn(2+)</name>
        <dbReference type="ChEBI" id="CHEBI:29105"/>
    </ligand>
</feature>
<feature type="binding site" evidence="2">
    <location>
        <position position="19"/>
    </location>
    <ligand>
        <name>Zn(2+)</name>
        <dbReference type="ChEBI" id="CHEBI:29105"/>
    </ligand>
</feature>
<feature type="binding site" evidence="2">
    <location>
        <position position="38"/>
    </location>
    <ligand>
        <name>Zn(2+)</name>
        <dbReference type="ChEBI" id="CHEBI:29105"/>
    </ligand>
</feature>
<feature type="binding site" evidence="2">
    <location>
        <position position="41"/>
    </location>
    <ligand>
        <name>Zn(2+)</name>
        <dbReference type="ChEBI" id="CHEBI:29105"/>
    </ligand>
</feature>
<feature type="binding site" evidence="1">
    <location>
        <begin position="121"/>
        <end position="128"/>
    </location>
    <ligand>
        <name>ATP</name>
        <dbReference type="ChEBI" id="CHEBI:30616"/>
    </ligand>
</feature>
<name>CLPX_SHESA</name>